<feature type="chain" id="PRO_0000373173" description="Protein MGF 100-2L">
    <location>
        <begin position="1"/>
        <end position="141"/>
    </location>
</feature>
<evidence type="ECO:0000250" key="1"/>
<evidence type="ECO:0000269" key="2">
    <source>
    </source>
</evidence>
<evidence type="ECO:0000305" key="3"/>
<comment type="function">
    <text evidence="1">Plays a role in virus cell tropism, and may be required for efficient virus replication in macrophages.</text>
</comment>
<comment type="induction">
    <text evidence="2">Expressed in the early phase of the viral replicative cycle.</text>
</comment>
<comment type="similarity">
    <text evidence="3">Belongs to the asfivirus MGF 100 family.</text>
</comment>
<keyword id="KW-0244">Early protein</keyword>
<keyword id="KW-1185">Reference proteome</keyword>
<name>1002L_ASFB7</name>
<gene>
    <name type="ordered locus">BA71V-151</name>
    <name type="ORF">DP141L</name>
</gene>
<reference key="1">
    <citation type="journal article" date="1990" name="J. Virol.">
        <title>Multigene families in African swine fever virus: family 360.</title>
        <authorList>
            <person name="Gonzalez A."/>
            <person name="Calvo V."/>
            <person name="Almazan F."/>
            <person name="Almendral J.M."/>
            <person name="Ramirez J.C."/>
            <person name="de la Vega I."/>
            <person name="Blasco R."/>
            <person name="Vinuela E."/>
        </authorList>
    </citation>
    <scope>NUCLEOTIDE SEQUENCE [GENOMIC DNA]</scope>
</reference>
<reference key="2">
    <citation type="journal article" date="1995" name="Virology">
        <title>Analysis of the complete nucleotide sequence of African swine fever virus.</title>
        <authorList>
            <person name="Yanez R.J."/>
            <person name="Rodriguez J.M."/>
            <person name="Nogal M.L."/>
            <person name="Yuste L."/>
            <person name="Enriquez C."/>
            <person name="Rodriguez J.F."/>
            <person name="Vinuela E."/>
        </authorList>
    </citation>
    <scope>NUCLEOTIDE SEQUENCE [LARGE SCALE GENOMIC DNA]</scope>
</reference>
<reference key="3">
    <citation type="journal article" date="2020" name="J. Virol.">
        <title>The African Swine Fever Virus Transcriptome.</title>
        <authorList>
            <person name="Cackett G."/>
            <person name="Matelska D."/>
            <person name="Sykora M."/>
            <person name="Portugal R."/>
            <person name="Malecki M."/>
            <person name="Baehler J."/>
            <person name="Dixon L."/>
            <person name="Werner F."/>
        </authorList>
    </citation>
    <scope>INDUCTION</scope>
</reference>
<proteinExistence type="evidence at transcript level"/>
<dbReference type="EMBL" id="U18466">
    <property type="protein sequence ID" value="AAA65377.1"/>
    <property type="molecule type" value="Genomic_DNA"/>
</dbReference>
<dbReference type="RefSeq" id="NP_042841.1">
    <property type="nucleotide sequence ID" value="NC_001659.2"/>
</dbReference>
<dbReference type="SMR" id="Q65209"/>
<dbReference type="GeneID" id="22220377"/>
<dbReference type="KEGG" id="vg:22220377"/>
<dbReference type="Proteomes" id="UP000000624">
    <property type="component" value="Segment"/>
</dbReference>
<organism>
    <name type="scientific">African swine fever virus (strain Badajoz 1971 Vero-adapted)</name>
    <name type="common">Ba71V</name>
    <name type="synonym">ASFV</name>
    <dbReference type="NCBI Taxonomy" id="10498"/>
    <lineage>
        <taxon>Viruses</taxon>
        <taxon>Varidnaviria</taxon>
        <taxon>Bamfordvirae</taxon>
        <taxon>Nucleocytoviricota</taxon>
        <taxon>Pokkesviricetes</taxon>
        <taxon>Asfuvirales</taxon>
        <taxon>Asfarviridae</taxon>
        <taxon>Asfivirus</taxon>
        <taxon>African swine fever virus</taxon>
    </lineage>
</organism>
<protein>
    <recommendedName>
        <fullName>Protein MGF 100-2L</fullName>
    </recommendedName>
</protein>
<organismHost>
    <name type="scientific">Ornithodoros</name>
    <name type="common">relapsing fever ticks</name>
    <dbReference type="NCBI Taxonomy" id="6937"/>
</organismHost>
<organismHost>
    <name type="scientific">Sus scrofa</name>
    <name type="common">Pig</name>
    <dbReference type="NCBI Taxonomy" id="9823"/>
</organismHost>
<accession>Q65209</accession>
<sequence>MGNKESKYLEMCSEEAWLNIPNIFKCIFIRKLFYNKWLKYQEKKLKKSLKLLSFYHPKKDFVGIRDMLHMAPGGSYFITDNITEEFLMLVVKHPEDGSAEFTKLCLKGSCIVIDGYYYDTLHIFLSETPDIYKYPLIRYDR</sequence>